<accession>B8J2Q8</accession>
<comment type="function">
    <text evidence="1">Catalyzes the deamination of 5-methylthioadenosine and S-adenosyl-L-homocysteine into 5-methylthioinosine and S-inosyl-L-homocysteine, respectively. Is also able to deaminate adenosine.</text>
</comment>
<comment type="catalytic activity">
    <reaction evidence="1">
        <text>S-adenosyl-L-homocysteine + H2O + H(+) = S-inosyl-L-homocysteine + NH4(+)</text>
        <dbReference type="Rhea" id="RHEA:20716"/>
        <dbReference type="ChEBI" id="CHEBI:15377"/>
        <dbReference type="ChEBI" id="CHEBI:15378"/>
        <dbReference type="ChEBI" id="CHEBI:28938"/>
        <dbReference type="ChEBI" id="CHEBI:57856"/>
        <dbReference type="ChEBI" id="CHEBI:57985"/>
        <dbReference type="EC" id="3.5.4.28"/>
    </reaction>
</comment>
<comment type="catalytic activity">
    <reaction evidence="1">
        <text>S-methyl-5'-thioadenosine + H2O + H(+) = S-methyl-5'-thioinosine + NH4(+)</text>
        <dbReference type="Rhea" id="RHEA:25025"/>
        <dbReference type="ChEBI" id="CHEBI:15377"/>
        <dbReference type="ChEBI" id="CHEBI:15378"/>
        <dbReference type="ChEBI" id="CHEBI:17509"/>
        <dbReference type="ChEBI" id="CHEBI:28938"/>
        <dbReference type="ChEBI" id="CHEBI:48595"/>
        <dbReference type="EC" id="3.5.4.31"/>
    </reaction>
</comment>
<comment type="cofactor">
    <cofactor evidence="1">
        <name>Zn(2+)</name>
        <dbReference type="ChEBI" id="CHEBI:29105"/>
    </cofactor>
    <text evidence="1">Binds 1 zinc ion per subunit.</text>
</comment>
<comment type="similarity">
    <text evidence="1">Belongs to the metallo-dependent hydrolases superfamily. MTA/SAH deaminase family.</text>
</comment>
<keyword id="KW-0378">Hydrolase</keyword>
<keyword id="KW-0479">Metal-binding</keyword>
<keyword id="KW-0862">Zinc</keyword>
<gene>
    <name evidence="1" type="primary">mtaD</name>
    <name type="ordered locus">Ddes_1931</name>
</gene>
<organism>
    <name type="scientific">Desulfovibrio desulfuricans (strain ATCC 27774 / DSM 6949 / MB)</name>
    <dbReference type="NCBI Taxonomy" id="525146"/>
    <lineage>
        <taxon>Bacteria</taxon>
        <taxon>Pseudomonadati</taxon>
        <taxon>Thermodesulfobacteriota</taxon>
        <taxon>Desulfovibrionia</taxon>
        <taxon>Desulfovibrionales</taxon>
        <taxon>Desulfovibrionaceae</taxon>
        <taxon>Desulfovibrio</taxon>
    </lineage>
</organism>
<feature type="chain" id="PRO_1000165239" description="5-methylthioadenosine/S-adenosylhomocysteine deaminase">
    <location>
        <begin position="1"/>
        <end position="440"/>
    </location>
</feature>
<feature type="binding site" evidence="1">
    <location>
        <position position="69"/>
    </location>
    <ligand>
        <name>Zn(2+)</name>
        <dbReference type="ChEBI" id="CHEBI:29105"/>
    </ligand>
</feature>
<feature type="binding site" evidence="1">
    <location>
        <position position="71"/>
    </location>
    <ligand>
        <name>Zn(2+)</name>
        <dbReference type="ChEBI" id="CHEBI:29105"/>
    </ligand>
</feature>
<feature type="binding site" evidence="1">
    <location>
        <position position="98"/>
    </location>
    <ligand>
        <name>substrate</name>
    </ligand>
</feature>
<feature type="binding site" evidence="1">
    <location>
        <position position="190"/>
    </location>
    <ligand>
        <name>substrate</name>
    </ligand>
</feature>
<feature type="binding site" evidence="1">
    <location>
        <position position="217"/>
    </location>
    <ligand>
        <name>Zn(2+)</name>
        <dbReference type="ChEBI" id="CHEBI:29105"/>
    </ligand>
</feature>
<feature type="binding site" evidence="1">
    <location>
        <position position="220"/>
    </location>
    <ligand>
        <name>substrate</name>
    </ligand>
</feature>
<feature type="binding site" evidence="1">
    <location>
        <position position="305"/>
    </location>
    <ligand>
        <name>substrate</name>
    </ligand>
</feature>
<feature type="binding site" evidence="1">
    <location>
        <position position="305"/>
    </location>
    <ligand>
        <name>Zn(2+)</name>
        <dbReference type="ChEBI" id="CHEBI:29105"/>
    </ligand>
</feature>
<name>MTAD_DESDA</name>
<evidence type="ECO:0000255" key="1">
    <source>
        <dbReference type="HAMAP-Rule" id="MF_01281"/>
    </source>
</evidence>
<proteinExistence type="inferred from homology"/>
<protein>
    <recommendedName>
        <fullName evidence="1">5-methylthioadenosine/S-adenosylhomocysteine deaminase</fullName>
        <shortName evidence="1">MTA/SAH deaminase</shortName>
        <ecNumber evidence="1">3.5.4.28</ecNumber>
        <ecNumber evidence="1">3.5.4.31</ecNumber>
    </recommendedName>
</protein>
<reference key="1">
    <citation type="submission" date="2009-01" db="EMBL/GenBank/DDBJ databases">
        <title>Complete sequence of Desulfovibrio desulfuricans subsp. desulfuricans str. ATCC 27774.</title>
        <authorList>
            <consortium name="US DOE Joint Genome Institute"/>
            <person name="Lucas S."/>
            <person name="Copeland A."/>
            <person name="Lapidus A."/>
            <person name="Glavina del Rio T."/>
            <person name="Tice H."/>
            <person name="Bruce D."/>
            <person name="Goodwin L."/>
            <person name="Pitluck S."/>
            <person name="Sims D."/>
            <person name="Lu M."/>
            <person name="Kiss H."/>
            <person name="Meineke L."/>
            <person name="Brettin T."/>
            <person name="Detter J.C."/>
            <person name="Han C."/>
            <person name="Larimer F."/>
            <person name="Land M."/>
            <person name="Hauser L."/>
            <person name="Kyrpides N."/>
            <person name="Ovchinnikova G."/>
            <person name="Hazen T.C."/>
        </authorList>
    </citation>
    <scope>NUCLEOTIDE SEQUENCE [LARGE SCALE GENOMIC DNA]</scope>
    <source>
        <strain>ATCC 27774 / DSM 6949 / MB</strain>
    </source>
</reference>
<dbReference type="EC" id="3.5.4.28" evidence="1"/>
<dbReference type="EC" id="3.5.4.31" evidence="1"/>
<dbReference type="EMBL" id="CP001358">
    <property type="protein sequence ID" value="ACL49827.1"/>
    <property type="molecule type" value="Genomic_DNA"/>
</dbReference>
<dbReference type="SMR" id="B8J2Q8"/>
<dbReference type="STRING" id="525146.Ddes_1931"/>
<dbReference type="KEGG" id="dds:Ddes_1931"/>
<dbReference type="eggNOG" id="COG0402">
    <property type="taxonomic scope" value="Bacteria"/>
</dbReference>
<dbReference type="HOGENOM" id="CLU_012358_2_1_7"/>
<dbReference type="GO" id="GO:0090614">
    <property type="term" value="F:5'-methylthioadenosine deaminase activity"/>
    <property type="evidence" value="ECO:0007669"/>
    <property type="project" value="UniProtKB-UniRule"/>
</dbReference>
<dbReference type="GO" id="GO:0046872">
    <property type="term" value="F:metal ion binding"/>
    <property type="evidence" value="ECO:0007669"/>
    <property type="project" value="UniProtKB-KW"/>
</dbReference>
<dbReference type="GO" id="GO:0050270">
    <property type="term" value="F:S-adenosylhomocysteine deaminase activity"/>
    <property type="evidence" value="ECO:0007669"/>
    <property type="project" value="UniProtKB-UniRule"/>
</dbReference>
<dbReference type="CDD" id="cd01298">
    <property type="entry name" value="ATZ_TRZ_like"/>
    <property type="match status" value="1"/>
</dbReference>
<dbReference type="FunFam" id="3.20.20.140:FF:000014">
    <property type="entry name" value="5-methylthioadenosine/S-adenosylhomocysteine deaminase"/>
    <property type="match status" value="1"/>
</dbReference>
<dbReference type="Gene3D" id="3.20.20.140">
    <property type="entry name" value="Metal-dependent hydrolases"/>
    <property type="match status" value="1"/>
</dbReference>
<dbReference type="Gene3D" id="2.30.40.10">
    <property type="entry name" value="Urease, subunit C, domain 1"/>
    <property type="match status" value="1"/>
</dbReference>
<dbReference type="HAMAP" id="MF_01281">
    <property type="entry name" value="MTA_SAH_deamin"/>
    <property type="match status" value="1"/>
</dbReference>
<dbReference type="InterPro" id="IPR006680">
    <property type="entry name" value="Amidohydro-rel"/>
</dbReference>
<dbReference type="InterPro" id="IPR023512">
    <property type="entry name" value="Deaminase_MtaD/DadD"/>
</dbReference>
<dbReference type="InterPro" id="IPR011059">
    <property type="entry name" value="Metal-dep_hydrolase_composite"/>
</dbReference>
<dbReference type="InterPro" id="IPR032466">
    <property type="entry name" value="Metal_Hydrolase"/>
</dbReference>
<dbReference type="InterPro" id="IPR050287">
    <property type="entry name" value="MTA/SAH_deaminase"/>
</dbReference>
<dbReference type="PANTHER" id="PTHR43794:SF11">
    <property type="entry name" value="AMIDOHYDROLASE-RELATED DOMAIN-CONTAINING PROTEIN"/>
    <property type="match status" value="1"/>
</dbReference>
<dbReference type="PANTHER" id="PTHR43794">
    <property type="entry name" value="AMINOHYDROLASE SSNA-RELATED"/>
    <property type="match status" value="1"/>
</dbReference>
<dbReference type="Pfam" id="PF01979">
    <property type="entry name" value="Amidohydro_1"/>
    <property type="match status" value="1"/>
</dbReference>
<dbReference type="SUPFAM" id="SSF51338">
    <property type="entry name" value="Composite domain of metallo-dependent hydrolases"/>
    <property type="match status" value="1"/>
</dbReference>
<dbReference type="SUPFAM" id="SSF51556">
    <property type="entry name" value="Metallo-dependent hydrolases"/>
    <property type="match status" value="1"/>
</dbReference>
<sequence length="440" mass="47625">MRPCQTLVHAALIVTQDKERRILENASMAVTDGIVADLGPRHEMITCWQPRHEADFGRCLLLPGLVNAHTHSAMTFLRGLADDMPLMDWLNKRIFPVEQKLTPEIVRLGSLMGYAEMLRTGTTACVDMYIFEKEAMAAADQAGLRCLGGEVVFAFPSAAFPGPEAALEETRALAQKYAGHPRLSIAVNPHSVYTTTPEILAACRDLARELALPLHMHLAETAEETQICLHAHGKRPVACCRSLELLDGPCTLAHVVDVTPDELDFLAQRGAVAVHNISSNMKLASGASPVPAMLERGMPVALGTDGAASNNRLNMFTEMGRAALLHKLTGMDPTLLPAQTVLDMATLGGAAAMHDNRLGSLAVGKAADCVALDLAAPNMQPLYNAVSHLVYAATGMENRMTMIAGEIVYEDGKFTRFDYDALCREMTSIRDFVRRQAGLA</sequence>